<proteinExistence type="inferred from homology"/>
<comment type="function">
    <text evidence="1">Has an important function as a repair enzyme for proteins that have been inactivated by oxidation. Catalyzes the reversible oxidation-reduction of methionine sulfoxide in proteins to methionine.</text>
</comment>
<comment type="catalytic activity">
    <reaction evidence="1">
        <text>L-methionyl-[protein] + [thioredoxin]-disulfide + H2O = L-methionyl-(S)-S-oxide-[protein] + [thioredoxin]-dithiol</text>
        <dbReference type="Rhea" id="RHEA:14217"/>
        <dbReference type="Rhea" id="RHEA-COMP:10698"/>
        <dbReference type="Rhea" id="RHEA-COMP:10700"/>
        <dbReference type="Rhea" id="RHEA-COMP:12313"/>
        <dbReference type="Rhea" id="RHEA-COMP:12315"/>
        <dbReference type="ChEBI" id="CHEBI:15377"/>
        <dbReference type="ChEBI" id="CHEBI:16044"/>
        <dbReference type="ChEBI" id="CHEBI:29950"/>
        <dbReference type="ChEBI" id="CHEBI:44120"/>
        <dbReference type="ChEBI" id="CHEBI:50058"/>
        <dbReference type="EC" id="1.8.4.11"/>
    </reaction>
</comment>
<comment type="catalytic activity">
    <reaction evidence="1">
        <text>[thioredoxin]-disulfide + L-methionine + H2O = L-methionine (S)-S-oxide + [thioredoxin]-dithiol</text>
        <dbReference type="Rhea" id="RHEA:19993"/>
        <dbReference type="Rhea" id="RHEA-COMP:10698"/>
        <dbReference type="Rhea" id="RHEA-COMP:10700"/>
        <dbReference type="ChEBI" id="CHEBI:15377"/>
        <dbReference type="ChEBI" id="CHEBI:29950"/>
        <dbReference type="ChEBI" id="CHEBI:50058"/>
        <dbReference type="ChEBI" id="CHEBI:57844"/>
        <dbReference type="ChEBI" id="CHEBI:58772"/>
        <dbReference type="EC" id="1.8.4.11"/>
    </reaction>
</comment>
<comment type="similarity">
    <text evidence="1">Belongs to the MsrA Met sulfoxide reductase family.</text>
</comment>
<sequence>MTKEYATLAGGCFWCMVKPFTSYPGIKSVVSGYSGGHVDNPTYEQVCTNQTGHVEAVQITFDPEVTSFENILDIYFKTFDPTDDQGQFFDRGESYQPVIFYHDEHQKKAAEFKKQQLNEQGIFKKPVITPIKPYKNFYPAEDYHQDYYKKNPVHYYQYQRGSGRKAFIESHWGNQNA</sequence>
<feature type="chain" id="PRO_0000138588" description="Peptide methionine sulfoxide reductase MsrA 2">
    <location>
        <begin position="1"/>
        <end position="177"/>
    </location>
</feature>
<feature type="active site" evidence="1">
    <location>
        <position position="12"/>
    </location>
</feature>
<keyword id="KW-0560">Oxidoreductase</keyword>
<reference key="1">
    <citation type="journal article" date="2004" name="Proc. Natl. Acad. Sci. U.S.A.">
        <title>Complete genomes of two clinical Staphylococcus aureus strains: evidence for the rapid evolution of virulence and drug resistance.</title>
        <authorList>
            <person name="Holden M.T.G."/>
            <person name="Feil E.J."/>
            <person name="Lindsay J.A."/>
            <person name="Peacock S.J."/>
            <person name="Day N.P.J."/>
            <person name="Enright M.C."/>
            <person name="Foster T.J."/>
            <person name="Moore C.E."/>
            <person name="Hurst L."/>
            <person name="Atkin R."/>
            <person name="Barron A."/>
            <person name="Bason N."/>
            <person name="Bentley S.D."/>
            <person name="Chillingworth C."/>
            <person name="Chillingworth T."/>
            <person name="Churcher C."/>
            <person name="Clark L."/>
            <person name="Corton C."/>
            <person name="Cronin A."/>
            <person name="Doggett J."/>
            <person name="Dowd L."/>
            <person name="Feltwell T."/>
            <person name="Hance Z."/>
            <person name="Harris B."/>
            <person name="Hauser H."/>
            <person name="Holroyd S."/>
            <person name="Jagels K."/>
            <person name="James K.D."/>
            <person name="Lennard N."/>
            <person name="Line A."/>
            <person name="Mayes R."/>
            <person name="Moule S."/>
            <person name="Mungall K."/>
            <person name="Ormond D."/>
            <person name="Quail M.A."/>
            <person name="Rabbinowitsch E."/>
            <person name="Rutherford K.M."/>
            <person name="Sanders M."/>
            <person name="Sharp S."/>
            <person name="Simmonds M."/>
            <person name="Stevens K."/>
            <person name="Whitehead S."/>
            <person name="Barrell B.G."/>
            <person name="Spratt B.G."/>
            <person name="Parkhill J."/>
        </authorList>
    </citation>
    <scope>NUCLEOTIDE SEQUENCE [LARGE SCALE GENOMIC DNA]</scope>
    <source>
        <strain>MSSA476</strain>
    </source>
</reference>
<name>MSRA2_STAAS</name>
<organism>
    <name type="scientific">Staphylococcus aureus (strain MSSA476)</name>
    <dbReference type="NCBI Taxonomy" id="282459"/>
    <lineage>
        <taxon>Bacteria</taxon>
        <taxon>Bacillati</taxon>
        <taxon>Bacillota</taxon>
        <taxon>Bacilli</taxon>
        <taxon>Bacillales</taxon>
        <taxon>Staphylococcaceae</taxon>
        <taxon>Staphylococcus</taxon>
    </lineage>
</organism>
<protein>
    <recommendedName>
        <fullName evidence="1">Peptide methionine sulfoxide reductase MsrA 2</fullName>
        <shortName evidence="1">Protein-methionine-S-oxide reductase 2</shortName>
        <ecNumber evidence="1">1.8.4.11</ecNumber>
    </recommendedName>
    <alternativeName>
        <fullName evidence="1">Peptide-methionine (S)-S-oxide reductase 2</fullName>
        <shortName evidence="1">Peptide Met(O) reductase 2</shortName>
    </alternativeName>
</protein>
<accession>Q6G9D7</accession>
<dbReference type="EC" id="1.8.4.11" evidence="1"/>
<dbReference type="EMBL" id="BX571857">
    <property type="protein sequence ID" value="CAG43143.1"/>
    <property type="molecule type" value="Genomic_DNA"/>
</dbReference>
<dbReference type="SMR" id="Q6G9D7"/>
<dbReference type="KEGG" id="sas:SAS1367"/>
<dbReference type="HOGENOM" id="CLU_031040_10_1_9"/>
<dbReference type="GO" id="GO:0033744">
    <property type="term" value="F:L-methionine:thioredoxin-disulfide S-oxidoreductase activity"/>
    <property type="evidence" value="ECO:0007669"/>
    <property type="project" value="RHEA"/>
</dbReference>
<dbReference type="GO" id="GO:0008113">
    <property type="term" value="F:peptide-methionine (S)-S-oxide reductase activity"/>
    <property type="evidence" value="ECO:0007669"/>
    <property type="project" value="UniProtKB-UniRule"/>
</dbReference>
<dbReference type="GO" id="GO:0036211">
    <property type="term" value="P:protein modification process"/>
    <property type="evidence" value="ECO:0007669"/>
    <property type="project" value="UniProtKB-UniRule"/>
</dbReference>
<dbReference type="FunFam" id="3.30.1060.10:FF:000003">
    <property type="entry name" value="Peptide methionine sulfoxide reductase MsrA"/>
    <property type="match status" value="1"/>
</dbReference>
<dbReference type="Gene3D" id="3.30.1060.10">
    <property type="entry name" value="Peptide methionine sulphoxide reductase MsrA"/>
    <property type="match status" value="1"/>
</dbReference>
<dbReference type="HAMAP" id="MF_01401">
    <property type="entry name" value="MsrA"/>
    <property type="match status" value="1"/>
</dbReference>
<dbReference type="InterPro" id="IPR002569">
    <property type="entry name" value="Met_Sox_Rdtase_MsrA_dom"/>
</dbReference>
<dbReference type="InterPro" id="IPR036509">
    <property type="entry name" value="Met_Sox_Rdtase_MsrA_sf"/>
</dbReference>
<dbReference type="NCBIfam" id="TIGR00401">
    <property type="entry name" value="msrA"/>
    <property type="match status" value="1"/>
</dbReference>
<dbReference type="PANTHER" id="PTHR43774">
    <property type="entry name" value="PEPTIDE METHIONINE SULFOXIDE REDUCTASE"/>
    <property type="match status" value="1"/>
</dbReference>
<dbReference type="PANTHER" id="PTHR43774:SF1">
    <property type="entry name" value="PEPTIDE METHIONINE SULFOXIDE REDUCTASE MSRA 2"/>
    <property type="match status" value="1"/>
</dbReference>
<dbReference type="Pfam" id="PF01625">
    <property type="entry name" value="PMSR"/>
    <property type="match status" value="1"/>
</dbReference>
<dbReference type="SUPFAM" id="SSF55068">
    <property type="entry name" value="Peptide methionine sulfoxide reductase"/>
    <property type="match status" value="1"/>
</dbReference>
<gene>
    <name evidence="1" type="primary">msrA2</name>
    <name type="ordered locus">SAS1367</name>
</gene>
<evidence type="ECO:0000255" key="1">
    <source>
        <dbReference type="HAMAP-Rule" id="MF_01401"/>
    </source>
</evidence>